<organism>
    <name type="scientific">Nitratidesulfovibrio vulgaris (strain ATCC 29579 / DSM 644 / CCUG 34227 / NCIMB 8303 / VKM B-1760 / Hildenborough)</name>
    <name type="common">Desulfovibrio vulgaris</name>
    <dbReference type="NCBI Taxonomy" id="882"/>
    <lineage>
        <taxon>Bacteria</taxon>
        <taxon>Pseudomonadati</taxon>
        <taxon>Thermodesulfobacteriota</taxon>
        <taxon>Desulfovibrionia</taxon>
        <taxon>Desulfovibrionales</taxon>
        <taxon>Desulfovibrionaceae</taxon>
        <taxon>Nitratidesulfovibrio</taxon>
    </lineage>
</organism>
<comment type="function">
    <text evidence="1">Catalyzes the transfer of a phosphate group to glutamate to form L-glutamate 5-phosphate.</text>
</comment>
<comment type="catalytic activity">
    <reaction evidence="1">
        <text>L-glutamate + ATP = L-glutamyl 5-phosphate + ADP</text>
        <dbReference type="Rhea" id="RHEA:14877"/>
        <dbReference type="ChEBI" id="CHEBI:29985"/>
        <dbReference type="ChEBI" id="CHEBI:30616"/>
        <dbReference type="ChEBI" id="CHEBI:58274"/>
        <dbReference type="ChEBI" id="CHEBI:456216"/>
        <dbReference type="EC" id="2.7.2.11"/>
    </reaction>
</comment>
<comment type="pathway">
    <text evidence="1">Amino-acid biosynthesis; L-proline biosynthesis; L-glutamate 5-semialdehyde from L-glutamate: step 1/2.</text>
</comment>
<comment type="subcellular location">
    <subcellularLocation>
        <location evidence="1">Cytoplasm</location>
    </subcellularLocation>
</comment>
<comment type="similarity">
    <text evidence="1">Belongs to the glutamate 5-kinase family.</text>
</comment>
<proteinExistence type="inferred from homology"/>
<dbReference type="EC" id="2.7.2.11" evidence="1"/>
<dbReference type="EMBL" id="AE017285">
    <property type="protein sequence ID" value="AAS95410.1"/>
    <property type="molecule type" value="Genomic_DNA"/>
</dbReference>
<dbReference type="RefSeq" id="WP_010938229.1">
    <property type="nucleotide sequence ID" value="NC_002937.3"/>
</dbReference>
<dbReference type="RefSeq" id="YP_010151.1">
    <property type="nucleotide sequence ID" value="NC_002937.3"/>
</dbReference>
<dbReference type="SMR" id="Q72DJ9"/>
<dbReference type="STRING" id="882.DVU_0930"/>
<dbReference type="PaxDb" id="882-DVU_0930"/>
<dbReference type="EnsemblBacteria" id="AAS95410">
    <property type="protein sequence ID" value="AAS95410"/>
    <property type="gene ID" value="DVU_0930"/>
</dbReference>
<dbReference type="KEGG" id="dvu:DVU_0930"/>
<dbReference type="PATRIC" id="fig|882.5.peg.874"/>
<dbReference type="eggNOG" id="COG0263">
    <property type="taxonomic scope" value="Bacteria"/>
</dbReference>
<dbReference type="HOGENOM" id="CLU_025400_2_0_7"/>
<dbReference type="OrthoDB" id="9804434at2"/>
<dbReference type="PhylomeDB" id="Q72DJ9"/>
<dbReference type="UniPathway" id="UPA00098">
    <property type="reaction ID" value="UER00359"/>
</dbReference>
<dbReference type="Proteomes" id="UP000002194">
    <property type="component" value="Chromosome"/>
</dbReference>
<dbReference type="GO" id="GO:0005829">
    <property type="term" value="C:cytosol"/>
    <property type="evidence" value="ECO:0007669"/>
    <property type="project" value="TreeGrafter"/>
</dbReference>
<dbReference type="GO" id="GO:0005524">
    <property type="term" value="F:ATP binding"/>
    <property type="evidence" value="ECO:0007669"/>
    <property type="project" value="UniProtKB-KW"/>
</dbReference>
<dbReference type="GO" id="GO:0004349">
    <property type="term" value="F:glutamate 5-kinase activity"/>
    <property type="evidence" value="ECO:0007669"/>
    <property type="project" value="UniProtKB-UniRule"/>
</dbReference>
<dbReference type="GO" id="GO:0003723">
    <property type="term" value="F:RNA binding"/>
    <property type="evidence" value="ECO:0007669"/>
    <property type="project" value="InterPro"/>
</dbReference>
<dbReference type="GO" id="GO:0055129">
    <property type="term" value="P:L-proline biosynthetic process"/>
    <property type="evidence" value="ECO:0007669"/>
    <property type="project" value="UniProtKB-UniRule"/>
</dbReference>
<dbReference type="CDD" id="cd04242">
    <property type="entry name" value="AAK_G5K_ProB"/>
    <property type="match status" value="1"/>
</dbReference>
<dbReference type="CDD" id="cd21157">
    <property type="entry name" value="PUA_G5K"/>
    <property type="match status" value="1"/>
</dbReference>
<dbReference type="FunFam" id="3.40.1160.10:FF:000006">
    <property type="entry name" value="Glutamate 5-kinase"/>
    <property type="match status" value="1"/>
</dbReference>
<dbReference type="Gene3D" id="3.40.1160.10">
    <property type="entry name" value="Acetylglutamate kinase-like"/>
    <property type="match status" value="2"/>
</dbReference>
<dbReference type="Gene3D" id="2.30.130.10">
    <property type="entry name" value="PUA domain"/>
    <property type="match status" value="1"/>
</dbReference>
<dbReference type="HAMAP" id="MF_00456">
    <property type="entry name" value="ProB"/>
    <property type="match status" value="1"/>
</dbReference>
<dbReference type="InterPro" id="IPR036393">
    <property type="entry name" value="AceGlu_kinase-like_sf"/>
</dbReference>
<dbReference type="InterPro" id="IPR001048">
    <property type="entry name" value="Asp/Glu/Uridylate_kinase"/>
</dbReference>
<dbReference type="InterPro" id="IPR041739">
    <property type="entry name" value="G5K_ProB"/>
</dbReference>
<dbReference type="InterPro" id="IPR001057">
    <property type="entry name" value="Glu/AcGlu_kinase"/>
</dbReference>
<dbReference type="InterPro" id="IPR011529">
    <property type="entry name" value="Glu_5kinase"/>
</dbReference>
<dbReference type="InterPro" id="IPR005715">
    <property type="entry name" value="Glu_5kinase/COase_Synthase"/>
</dbReference>
<dbReference type="InterPro" id="IPR019797">
    <property type="entry name" value="Glutamate_5-kinase_CS"/>
</dbReference>
<dbReference type="InterPro" id="IPR002478">
    <property type="entry name" value="PUA"/>
</dbReference>
<dbReference type="InterPro" id="IPR015947">
    <property type="entry name" value="PUA-like_sf"/>
</dbReference>
<dbReference type="InterPro" id="IPR036974">
    <property type="entry name" value="PUA_sf"/>
</dbReference>
<dbReference type="NCBIfam" id="TIGR01027">
    <property type="entry name" value="proB"/>
    <property type="match status" value="1"/>
</dbReference>
<dbReference type="PANTHER" id="PTHR43654">
    <property type="entry name" value="GLUTAMATE 5-KINASE"/>
    <property type="match status" value="1"/>
</dbReference>
<dbReference type="PANTHER" id="PTHR43654:SF1">
    <property type="entry name" value="ISOPENTENYL PHOSPHATE KINASE"/>
    <property type="match status" value="1"/>
</dbReference>
<dbReference type="Pfam" id="PF00696">
    <property type="entry name" value="AA_kinase"/>
    <property type="match status" value="1"/>
</dbReference>
<dbReference type="Pfam" id="PF01472">
    <property type="entry name" value="PUA"/>
    <property type="match status" value="1"/>
</dbReference>
<dbReference type="PIRSF" id="PIRSF000729">
    <property type="entry name" value="GK"/>
    <property type="match status" value="1"/>
</dbReference>
<dbReference type="PRINTS" id="PR00474">
    <property type="entry name" value="GLU5KINASE"/>
</dbReference>
<dbReference type="SMART" id="SM00359">
    <property type="entry name" value="PUA"/>
    <property type="match status" value="1"/>
</dbReference>
<dbReference type="SUPFAM" id="SSF53633">
    <property type="entry name" value="Carbamate kinase-like"/>
    <property type="match status" value="1"/>
</dbReference>
<dbReference type="SUPFAM" id="SSF88697">
    <property type="entry name" value="PUA domain-like"/>
    <property type="match status" value="1"/>
</dbReference>
<dbReference type="PROSITE" id="PS00902">
    <property type="entry name" value="GLUTAMATE_5_KINASE"/>
    <property type="match status" value="1"/>
</dbReference>
<dbReference type="PROSITE" id="PS50890">
    <property type="entry name" value="PUA"/>
    <property type="match status" value="1"/>
</dbReference>
<feature type="chain" id="PRO_0000109668" description="Glutamate 5-kinase">
    <location>
        <begin position="1"/>
        <end position="380"/>
    </location>
</feature>
<feature type="domain" description="PUA" evidence="1">
    <location>
        <begin position="285"/>
        <end position="363"/>
    </location>
</feature>
<feature type="binding site" evidence="1">
    <location>
        <position position="20"/>
    </location>
    <ligand>
        <name>ATP</name>
        <dbReference type="ChEBI" id="CHEBI:30616"/>
    </ligand>
</feature>
<feature type="binding site" evidence="1">
    <location>
        <position position="59"/>
    </location>
    <ligand>
        <name>substrate</name>
    </ligand>
</feature>
<feature type="binding site" evidence="1">
    <location>
        <position position="146"/>
    </location>
    <ligand>
        <name>substrate</name>
    </ligand>
</feature>
<feature type="binding site" evidence="1">
    <location>
        <position position="158"/>
    </location>
    <ligand>
        <name>substrate</name>
    </ligand>
</feature>
<feature type="binding site" evidence="1">
    <location>
        <begin position="220"/>
        <end position="226"/>
    </location>
    <ligand>
        <name>ATP</name>
        <dbReference type="ChEBI" id="CHEBI:30616"/>
    </ligand>
</feature>
<protein>
    <recommendedName>
        <fullName evidence="1">Glutamate 5-kinase</fullName>
        <ecNumber evidence="1">2.7.2.11</ecNumber>
    </recommendedName>
    <alternativeName>
        <fullName evidence="1">Gamma-glutamyl kinase</fullName>
        <shortName evidence="1">GK</shortName>
    </alternativeName>
</protein>
<accession>Q72DJ9</accession>
<gene>
    <name evidence="1" type="primary">proB</name>
    <name type="ordered locus">DVU_0930</name>
</gene>
<evidence type="ECO:0000255" key="1">
    <source>
        <dbReference type="HAMAP-Rule" id="MF_00456"/>
    </source>
</evidence>
<keyword id="KW-0028">Amino-acid biosynthesis</keyword>
<keyword id="KW-0067">ATP-binding</keyword>
<keyword id="KW-0963">Cytoplasm</keyword>
<keyword id="KW-0418">Kinase</keyword>
<keyword id="KW-0547">Nucleotide-binding</keyword>
<keyword id="KW-0641">Proline biosynthesis</keyword>
<keyword id="KW-1185">Reference proteome</keyword>
<keyword id="KW-0808">Transferase</keyword>
<reference key="1">
    <citation type="journal article" date="2004" name="Nat. Biotechnol.">
        <title>The genome sequence of the anaerobic, sulfate-reducing bacterium Desulfovibrio vulgaris Hildenborough.</title>
        <authorList>
            <person name="Heidelberg J.F."/>
            <person name="Seshadri R."/>
            <person name="Haveman S.A."/>
            <person name="Hemme C.L."/>
            <person name="Paulsen I.T."/>
            <person name="Kolonay J.F."/>
            <person name="Eisen J.A."/>
            <person name="Ward N.L."/>
            <person name="Methe B.A."/>
            <person name="Brinkac L.M."/>
            <person name="Daugherty S.C."/>
            <person name="DeBoy R.T."/>
            <person name="Dodson R.J."/>
            <person name="Durkin A.S."/>
            <person name="Madupu R."/>
            <person name="Nelson W.C."/>
            <person name="Sullivan S.A."/>
            <person name="Fouts D.E."/>
            <person name="Haft D.H."/>
            <person name="Selengut J."/>
            <person name="Peterson J.D."/>
            <person name="Davidsen T.M."/>
            <person name="Zafar N."/>
            <person name="Zhou L."/>
            <person name="Radune D."/>
            <person name="Dimitrov G."/>
            <person name="Hance M."/>
            <person name="Tran K."/>
            <person name="Khouri H.M."/>
            <person name="Gill J."/>
            <person name="Utterback T.R."/>
            <person name="Feldblyum T.V."/>
            <person name="Wall J.D."/>
            <person name="Voordouw G."/>
            <person name="Fraser C.M."/>
        </authorList>
    </citation>
    <scope>NUCLEOTIDE SEQUENCE [LARGE SCALE GENOMIC DNA]</scope>
    <source>
        <strain>ATCC 29579 / DSM 644 / CCUG 34227 / NCIMB 8303 / VKM B-1760 / Hildenborough</strain>
    </source>
</reference>
<name>PROB_NITV2</name>
<sequence length="380" mass="40567">MEWTEERAAALREARCVVVKVGSAVLTTETGVNLAVIDSLAAQLSALQESGKRVVLVSSGAVAAGRSALRDCCEIAGMPHKQAASAVGQSRLMHHYDEAFARYGHLSAQVLLTRDDLRNRERFLNARNTFQALLDWGVIPVVNENDTVAVQELKFGDNDCLASLLLNVVEGDLYVNLTSASGVYADNPQTNPEAGILPCIEDVHTLDLDVMCGGKTSVGTGGMYSKLLAASRAAQLGVPTLILPGREPRILERAFSGEPVGTWVRPEARVVSRRKYWLAYQSEPSGTVTVDEGAARALLQQGGSLLPGGVCDVSGAFEPGALVRIAGPDGTVIAVGLSNYGDRDLVRIKGHRRHEVAAILGDAHFPEVVHRDNMLLDAVV</sequence>